<sequence>MDSHTLVQALIYLGSAALIVPIAVRLGLGSVLGYLIAGCIIGPWGLRLVTDAESILHFAEIGVVLMLFIIGLELDPQRLWKLRAAVFGGGALQMVICGGLLGLFCMLLGLRWQVAELIGMTLALSSTAIAMQAMNERNLMVTQMGRSAFAVLLFQDIAAIPLVAMIPLLAASSASTTMGAFALSALKVAGALVLVVLLGRYVTRPALRFVARSGLREVFSAVALFLVFGFGLLLEEVGLSMAMGAFLAGVLLASSEYRHALESDIEPFKGLLLGLFFIGVGMSIDFGTLIENPLRIVILLLGFLIIKIAMLWLIARPLQVPNKQRRWFAVLLGQGSEFAFVVFGAAQMANVLEPEWAKSLTLAVALSMAATPILLVILNRLEQSSTEEAREADEIDEEQPRVIIAGFGRFGQITGRLLLSSGVKMVVLDHDPDHIETLRKFGMKVFYGDATRMDLLESAGAAKAEVLINAIDDPQTNLQLTEMVKEHFPHLQIIARARDVDHYICLRQAGVEKPERETFEGALKTGRLALESLGLGPYEARERADVFRRFNIQMVEEMAMVENDTKARAAVYKRTSAMLSEIITEDREHLSLIQRHGWQGTEEGKHTGNMADEPETKPSS</sequence>
<gene>
    <name evidence="1" type="primary">kefC</name>
    <name type="ordered locus">ECH74115_0051</name>
</gene>
<feature type="chain" id="PRO_1000145536" description="Glutathione-regulated potassium-efflux system protein KefC">
    <location>
        <begin position="1"/>
        <end position="620"/>
    </location>
</feature>
<feature type="transmembrane region" description="Helical" evidence="1">
    <location>
        <begin position="4"/>
        <end position="24"/>
    </location>
</feature>
<feature type="transmembrane region" description="Helical" evidence="1">
    <location>
        <begin position="26"/>
        <end position="46"/>
    </location>
</feature>
<feature type="transmembrane region" description="Helical" evidence="1">
    <location>
        <begin position="54"/>
        <end position="74"/>
    </location>
</feature>
<feature type="transmembrane region" description="Helical" evidence="1">
    <location>
        <begin position="90"/>
        <end position="110"/>
    </location>
</feature>
<feature type="transmembrane region" description="Helical" evidence="1">
    <location>
        <begin position="114"/>
        <end position="134"/>
    </location>
</feature>
<feature type="transmembrane region" description="Helical" evidence="1">
    <location>
        <begin position="149"/>
        <end position="169"/>
    </location>
</feature>
<feature type="transmembrane region" description="Helical" evidence="1">
    <location>
        <begin position="178"/>
        <end position="198"/>
    </location>
</feature>
<feature type="transmembrane region" description="Helical" evidence="1">
    <location>
        <begin position="218"/>
        <end position="238"/>
    </location>
</feature>
<feature type="transmembrane region" description="Helical" evidence="1">
    <location>
        <begin position="270"/>
        <end position="290"/>
    </location>
</feature>
<feature type="transmembrane region" description="Helical" evidence="1">
    <location>
        <begin position="294"/>
        <end position="314"/>
    </location>
</feature>
<feature type="transmembrane region" description="Helical" evidence="1">
    <location>
        <begin position="327"/>
        <end position="347"/>
    </location>
</feature>
<feature type="transmembrane region" description="Helical" evidence="1">
    <location>
        <begin position="359"/>
        <end position="379"/>
    </location>
</feature>
<feature type="domain" description="RCK N-terminal" evidence="2">
    <location>
        <begin position="399"/>
        <end position="518"/>
    </location>
</feature>
<feature type="region of interest" description="Disordered" evidence="3">
    <location>
        <begin position="597"/>
        <end position="620"/>
    </location>
</feature>
<comment type="function">
    <text evidence="1">Pore-forming subunit of a potassium efflux system that confers protection against electrophiles. Catalyzes K(+)/H(+) antiport.</text>
</comment>
<comment type="subunit">
    <text evidence="1">Homodimer. Interacts with the regulatory subunit KefF.</text>
</comment>
<comment type="subcellular location">
    <subcellularLocation>
        <location evidence="1">Cell inner membrane</location>
        <topology evidence="1">Multi-pass membrane protein</topology>
    </subcellularLocation>
</comment>
<comment type="similarity">
    <text evidence="1">Belongs to the monovalent cation:proton antiporter 2 (CPA2) transporter (TC 2.A.37) family. KefC subfamily.</text>
</comment>
<name>KEFC_ECO5E</name>
<evidence type="ECO:0000255" key="1">
    <source>
        <dbReference type="HAMAP-Rule" id="MF_01413"/>
    </source>
</evidence>
<evidence type="ECO:0000255" key="2">
    <source>
        <dbReference type="PROSITE-ProRule" id="PRU00543"/>
    </source>
</evidence>
<evidence type="ECO:0000256" key="3">
    <source>
        <dbReference type="SAM" id="MobiDB-lite"/>
    </source>
</evidence>
<keyword id="KW-0050">Antiport</keyword>
<keyword id="KW-0997">Cell inner membrane</keyword>
<keyword id="KW-1003">Cell membrane</keyword>
<keyword id="KW-0406">Ion transport</keyword>
<keyword id="KW-0472">Membrane</keyword>
<keyword id="KW-0630">Potassium</keyword>
<keyword id="KW-0633">Potassium transport</keyword>
<keyword id="KW-0812">Transmembrane</keyword>
<keyword id="KW-1133">Transmembrane helix</keyword>
<keyword id="KW-0813">Transport</keyword>
<organism>
    <name type="scientific">Escherichia coli O157:H7 (strain EC4115 / EHEC)</name>
    <dbReference type="NCBI Taxonomy" id="444450"/>
    <lineage>
        <taxon>Bacteria</taxon>
        <taxon>Pseudomonadati</taxon>
        <taxon>Pseudomonadota</taxon>
        <taxon>Gammaproteobacteria</taxon>
        <taxon>Enterobacterales</taxon>
        <taxon>Enterobacteriaceae</taxon>
        <taxon>Escherichia</taxon>
    </lineage>
</organism>
<protein>
    <recommendedName>
        <fullName evidence="1">Glutathione-regulated potassium-efflux system protein KefC</fullName>
    </recommendedName>
    <alternativeName>
        <fullName evidence="1">K(+)/H(+) antiporter</fullName>
    </alternativeName>
</protein>
<proteinExistence type="inferred from homology"/>
<dbReference type="EMBL" id="CP001164">
    <property type="protein sequence ID" value="ACI37924.1"/>
    <property type="molecule type" value="Genomic_DNA"/>
</dbReference>
<dbReference type="RefSeq" id="WP_000377184.1">
    <property type="nucleotide sequence ID" value="NC_011353.1"/>
</dbReference>
<dbReference type="SMR" id="B5YZ83"/>
<dbReference type="KEGG" id="ecf:ECH74115_0051"/>
<dbReference type="HOGENOM" id="CLU_005126_9_3_6"/>
<dbReference type="GO" id="GO:0005886">
    <property type="term" value="C:plasma membrane"/>
    <property type="evidence" value="ECO:0007669"/>
    <property type="project" value="UniProtKB-SubCell"/>
</dbReference>
<dbReference type="GO" id="GO:0019899">
    <property type="term" value="F:enzyme binding"/>
    <property type="evidence" value="ECO:0007669"/>
    <property type="project" value="InterPro"/>
</dbReference>
<dbReference type="GO" id="GO:0015503">
    <property type="term" value="F:glutathione-regulated potassium exporter activity"/>
    <property type="evidence" value="ECO:0007669"/>
    <property type="project" value="UniProtKB-UniRule"/>
</dbReference>
<dbReference type="GO" id="GO:0015643">
    <property type="term" value="F:toxic substance binding"/>
    <property type="evidence" value="ECO:0007669"/>
    <property type="project" value="InterPro"/>
</dbReference>
<dbReference type="GO" id="GO:1902600">
    <property type="term" value="P:proton transmembrane transport"/>
    <property type="evidence" value="ECO:0007669"/>
    <property type="project" value="InterPro"/>
</dbReference>
<dbReference type="GO" id="GO:0051595">
    <property type="term" value="P:response to methylglyoxal"/>
    <property type="evidence" value="ECO:0007669"/>
    <property type="project" value="InterPro"/>
</dbReference>
<dbReference type="FunFam" id="1.20.1530.20:FF:000001">
    <property type="entry name" value="Glutathione-regulated potassium-efflux system protein KefB"/>
    <property type="match status" value="1"/>
</dbReference>
<dbReference type="FunFam" id="3.40.50.720:FF:000036">
    <property type="entry name" value="Glutathione-regulated potassium-efflux system protein KefB"/>
    <property type="match status" value="1"/>
</dbReference>
<dbReference type="Gene3D" id="1.20.1530.20">
    <property type="match status" value="1"/>
</dbReference>
<dbReference type="Gene3D" id="3.40.50.720">
    <property type="entry name" value="NAD(P)-binding Rossmann-like Domain"/>
    <property type="match status" value="1"/>
</dbReference>
<dbReference type="HAMAP" id="MF_01413">
    <property type="entry name" value="K_H_efflux_KefC"/>
    <property type="match status" value="1"/>
</dbReference>
<dbReference type="InterPro" id="IPR006153">
    <property type="entry name" value="Cation/H_exchanger_TM"/>
</dbReference>
<dbReference type="InterPro" id="IPR004771">
    <property type="entry name" value="K/H_exchanger"/>
</dbReference>
<dbReference type="InterPro" id="IPR023941">
    <property type="entry name" value="K_H_efflux_KefC"/>
</dbReference>
<dbReference type="InterPro" id="IPR006036">
    <property type="entry name" value="K_uptake_TrkA"/>
</dbReference>
<dbReference type="InterPro" id="IPR038770">
    <property type="entry name" value="Na+/solute_symporter_sf"/>
</dbReference>
<dbReference type="InterPro" id="IPR036291">
    <property type="entry name" value="NAD(P)-bd_dom_sf"/>
</dbReference>
<dbReference type="InterPro" id="IPR003148">
    <property type="entry name" value="RCK_N"/>
</dbReference>
<dbReference type="NCBIfam" id="TIGR00932">
    <property type="entry name" value="2a37"/>
    <property type="match status" value="1"/>
</dbReference>
<dbReference type="NCBIfam" id="NF002924">
    <property type="entry name" value="PRK03562.1"/>
    <property type="match status" value="1"/>
</dbReference>
<dbReference type="PANTHER" id="PTHR46157:SF3">
    <property type="entry name" value="GLUTATHIONE-REGULATED POTASSIUM-EFFLUX SYSTEM PROTEIN KEFC"/>
    <property type="match status" value="1"/>
</dbReference>
<dbReference type="PANTHER" id="PTHR46157">
    <property type="entry name" value="K(+) EFFLUX ANTIPORTER 3, CHLOROPLASTIC"/>
    <property type="match status" value="1"/>
</dbReference>
<dbReference type="Pfam" id="PF00999">
    <property type="entry name" value="Na_H_Exchanger"/>
    <property type="match status" value="1"/>
</dbReference>
<dbReference type="Pfam" id="PF02254">
    <property type="entry name" value="TrkA_N"/>
    <property type="match status" value="1"/>
</dbReference>
<dbReference type="PRINTS" id="PR00335">
    <property type="entry name" value="KUPTAKETRKA"/>
</dbReference>
<dbReference type="SUPFAM" id="SSF51735">
    <property type="entry name" value="NAD(P)-binding Rossmann-fold domains"/>
    <property type="match status" value="1"/>
</dbReference>
<dbReference type="PROSITE" id="PS51201">
    <property type="entry name" value="RCK_N"/>
    <property type="match status" value="1"/>
</dbReference>
<accession>B5YZ83</accession>
<reference key="1">
    <citation type="journal article" date="2011" name="Proc. Natl. Acad. Sci. U.S.A.">
        <title>Genomic anatomy of Escherichia coli O157:H7 outbreaks.</title>
        <authorList>
            <person name="Eppinger M."/>
            <person name="Mammel M.K."/>
            <person name="Leclerc J.E."/>
            <person name="Ravel J."/>
            <person name="Cebula T.A."/>
        </authorList>
    </citation>
    <scope>NUCLEOTIDE SEQUENCE [LARGE SCALE GENOMIC DNA]</scope>
    <source>
        <strain>EC4115 / EHEC</strain>
    </source>
</reference>